<keyword id="KW-0067">ATP-binding</keyword>
<keyword id="KW-0143">Chaperone</keyword>
<keyword id="KW-0963">Cytoplasm</keyword>
<keyword id="KW-0413">Isomerase</keyword>
<keyword id="KW-0547">Nucleotide-binding</keyword>
<protein>
    <recommendedName>
        <fullName evidence="1">Chaperonin GroEL 1</fullName>
        <ecNumber evidence="1">5.6.1.7</ecNumber>
    </recommendedName>
    <alternativeName>
        <fullName evidence="1">60 kDa chaperonin 1</fullName>
    </alternativeName>
    <alternativeName>
        <fullName evidence="1">Chaperonin-60 1</fullName>
        <shortName evidence="1">Cpn60 1</shortName>
    </alternativeName>
</protein>
<reference key="1">
    <citation type="journal article" date="2007" name="PLoS Genet.">
        <title>Patterns and implications of gene gain and loss in the evolution of Prochlorococcus.</title>
        <authorList>
            <person name="Kettler G.C."/>
            <person name="Martiny A.C."/>
            <person name="Huang K."/>
            <person name="Zucker J."/>
            <person name="Coleman M.L."/>
            <person name="Rodrigue S."/>
            <person name="Chen F."/>
            <person name="Lapidus A."/>
            <person name="Ferriera S."/>
            <person name="Johnson J."/>
            <person name="Steglich C."/>
            <person name="Church G.M."/>
            <person name="Richardson P."/>
            <person name="Chisholm S.W."/>
        </authorList>
    </citation>
    <scope>NUCLEOTIDE SEQUENCE [LARGE SCALE GENOMIC DNA]</scope>
    <source>
        <strain>MIT 9515</strain>
    </source>
</reference>
<comment type="function">
    <text evidence="1">Together with its co-chaperonin GroES, plays an essential role in assisting protein folding. The GroEL-GroES system forms a nano-cage that allows encapsulation of the non-native substrate proteins and provides a physical environment optimized to promote and accelerate protein folding.</text>
</comment>
<comment type="catalytic activity">
    <reaction evidence="1">
        <text>ATP + H2O + a folded polypeptide = ADP + phosphate + an unfolded polypeptide.</text>
        <dbReference type="EC" id="5.6.1.7"/>
    </reaction>
</comment>
<comment type="subunit">
    <text evidence="1">Forms a cylinder of 14 subunits composed of two heptameric rings stacked back-to-back. Interacts with the co-chaperonin GroES.</text>
</comment>
<comment type="subcellular location">
    <subcellularLocation>
        <location evidence="1">Cytoplasm</location>
    </subcellularLocation>
</comment>
<comment type="similarity">
    <text evidence="1">Belongs to the chaperonin (HSP60) family.</text>
</comment>
<evidence type="ECO:0000255" key="1">
    <source>
        <dbReference type="HAMAP-Rule" id="MF_00600"/>
    </source>
</evidence>
<organism>
    <name type="scientific">Prochlorococcus marinus (strain MIT 9515)</name>
    <dbReference type="NCBI Taxonomy" id="167542"/>
    <lineage>
        <taxon>Bacteria</taxon>
        <taxon>Bacillati</taxon>
        <taxon>Cyanobacteriota</taxon>
        <taxon>Cyanophyceae</taxon>
        <taxon>Synechococcales</taxon>
        <taxon>Prochlorococcaceae</taxon>
        <taxon>Prochlorococcus</taxon>
    </lineage>
</organism>
<proteinExistence type="inferred from homology"/>
<dbReference type="EC" id="5.6.1.7" evidence="1"/>
<dbReference type="EMBL" id="CP000552">
    <property type="protein sequence ID" value="ABM71723.1"/>
    <property type="molecule type" value="Genomic_DNA"/>
</dbReference>
<dbReference type="RefSeq" id="WP_011819831.1">
    <property type="nucleotide sequence ID" value="NC_008817.1"/>
</dbReference>
<dbReference type="SMR" id="A2BVB2"/>
<dbReference type="STRING" id="167542.P9515_05141"/>
<dbReference type="GeneID" id="60201153"/>
<dbReference type="KEGG" id="pmc:P9515_05141"/>
<dbReference type="eggNOG" id="COG0459">
    <property type="taxonomic scope" value="Bacteria"/>
</dbReference>
<dbReference type="HOGENOM" id="CLU_016503_3_0_3"/>
<dbReference type="OrthoDB" id="9766614at2"/>
<dbReference type="Proteomes" id="UP000001589">
    <property type="component" value="Chromosome"/>
</dbReference>
<dbReference type="GO" id="GO:0005737">
    <property type="term" value="C:cytoplasm"/>
    <property type="evidence" value="ECO:0007669"/>
    <property type="project" value="UniProtKB-SubCell"/>
</dbReference>
<dbReference type="GO" id="GO:0005524">
    <property type="term" value="F:ATP binding"/>
    <property type="evidence" value="ECO:0007669"/>
    <property type="project" value="UniProtKB-UniRule"/>
</dbReference>
<dbReference type="GO" id="GO:0140662">
    <property type="term" value="F:ATP-dependent protein folding chaperone"/>
    <property type="evidence" value="ECO:0007669"/>
    <property type="project" value="InterPro"/>
</dbReference>
<dbReference type="GO" id="GO:0016853">
    <property type="term" value="F:isomerase activity"/>
    <property type="evidence" value="ECO:0007669"/>
    <property type="project" value="UniProtKB-KW"/>
</dbReference>
<dbReference type="GO" id="GO:0051082">
    <property type="term" value="F:unfolded protein binding"/>
    <property type="evidence" value="ECO:0007669"/>
    <property type="project" value="UniProtKB-UniRule"/>
</dbReference>
<dbReference type="GO" id="GO:0042026">
    <property type="term" value="P:protein refolding"/>
    <property type="evidence" value="ECO:0007669"/>
    <property type="project" value="UniProtKB-UniRule"/>
</dbReference>
<dbReference type="CDD" id="cd03344">
    <property type="entry name" value="GroEL"/>
    <property type="match status" value="1"/>
</dbReference>
<dbReference type="FunFam" id="3.50.7.10:FF:000001">
    <property type="entry name" value="60 kDa chaperonin"/>
    <property type="match status" value="1"/>
</dbReference>
<dbReference type="Gene3D" id="3.50.7.10">
    <property type="entry name" value="GroEL"/>
    <property type="match status" value="1"/>
</dbReference>
<dbReference type="Gene3D" id="1.10.560.10">
    <property type="entry name" value="GroEL-like equatorial domain"/>
    <property type="match status" value="1"/>
</dbReference>
<dbReference type="Gene3D" id="3.30.260.10">
    <property type="entry name" value="TCP-1-like chaperonin intermediate domain"/>
    <property type="match status" value="1"/>
</dbReference>
<dbReference type="HAMAP" id="MF_00600">
    <property type="entry name" value="CH60"/>
    <property type="match status" value="1"/>
</dbReference>
<dbReference type="InterPro" id="IPR018370">
    <property type="entry name" value="Chaperonin_Cpn60_CS"/>
</dbReference>
<dbReference type="InterPro" id="IPR001844">
    <property type="entry name" value="Cpn60/GroEL"/>
</dbReference>
<dbReference type="InterPro" id="IPR002423">
    <property type="entry name" value="Cpn60/GroEL/TCP-1"/>
</dbReference>
<dbReference type="InterPro" id="IPR027409">
    <property type="entry name" value="GroEL-like_apical_dom_sf"/>
</dbReference>
<dbReference type="InterPro" id="IPR027413">
    <property type="entry name" value="GROEL-like_equatorial_sf"/>
</dbReference>
<dbReference type="InterPro" id="IPR027410">
    <property type="entry name" value="TCP-1-like_intermed_sf"/>
</dbReference>
<dbReference type="NCBIfam" id="TIGR02348">
    <property type="entry name" value="GroEL"/>
    <property type="match status" value="1"/>
</dbReference>
<dbReference type="NCBIfam" id="NF000592">
    <property type="entry name" value="PRK00013.1"/>
    <property type="match status" value="1"/>
</dbReference>
<dbReference type="NCBIfam" id="NF009487">
    <property type="entry name" value="PRK12849.1"/>
    <property type="match status" value="1"/>
</dbReference>
<dbReference type="NCBIfam" id="NF009488">
    <property type="entry name" value="PRK12850.1"/>
    <property type="match status" value="1"/>
</dbReference>
<dbReference type="NCBIfam" id="NF009489">
    <property type="entry name" value="PRK12851.1"/>
    <property type="match status" value="1"/>
</dbReference>
<dbReference type="PANTHER" id="PTHR45633">
    <property type="entry name" value="60 KDA HEAT SHOCK PROTEIN, MITOCHONDRIAL"/>
    <property type="match status" value="1"/>
</dbReference>
<dbReference type="Pfam" id="PF00118">
    <property type="entry name" value="Cpn60_TCP1"/>
    <property type="match status" value="1"/>
</dbReference>
<dbReference type="PRINTS" id="PR00298">
    <property type="entry name" value="CHAPERONIN60"/>
</dbReference>
<dbReference type="SUPFAM" id="SSF52029">
    <property type="entry name" value="GroEL apical domain-like"/>
    <property type="match status" value="1"/>
</dbReference>
<dbReference type="SUPFAM" id="SSF48592">
    <property type="entry name" value="GroEL equatorial domain-like"/>
    <property type="match status" value="1"/>
</dbReference>
<dbReference type="SUPFAM" id="SSF54849">
    <property type="entry name" value="GroEL-intermediate domain like"/>
    <property type="match status" value="1"/>
</dbReference>
<dbReference type="PROSITE" id="PS00296">
    <property type="entry name" value="CHAPERONINS_CPN60"/>
    <property type="match status" value="1"/>
</dbReference>
<accession>A2BVB2</accession>
<sequence length="587" mass="61972">MPKQLSFSNDSREALENGVNTVANAVKVTIGPKAKNVVIERKFGSPDIVRDGSTVAKEINLDNPISNLGAKLIEQVASKTKESAGDGTTTATILTQIMVQEGLKNIAAGASPIELKKGMEKGLDIVLEKLKSKSIKINGSDIQKVATVSAGGDEEIGSIISKAMDIVTSDGVITVEESQSLETELDITEGMSFDRGYSSPYFVTDQERQICELENPKILITDQKISTLTNLVPILEEIQKSSSPFLVLAEDIEGEALTTLVLNKNSGVLNVSAVRAPSFGERRKAALEDIAILTGARLISEDQSMKLEEVTINDLGKAKKITISKDKTTIVAFDDTKDLVKARVEKLKREVEITESEYDKDKINERIAKLAGGVALIKVGAATETEMKYKKLRIEDSLNATKAAIEEGVVSGGGQTLIEISEELSNLGKEKSVDLNTGIKIITKALLEPTKQIARNAGFNGDVVIADIKRLNKGFNANNGQYENLNQSGILDPTKVIRLALQDSVSIAAMILTTEVAVADIPEPEAPAPGGPGADPMGGMGGMGGMGGMGMPGMGGMGMPGMGGMGMPGMGGMGMPGMGGMGMPGMM</sequence>
<name>CH601_PROM5</name>
<gene>
    <name evidence="1" type="primary">groEL1</name>
    <name evidence="1" type="synonym">groL1</name>
    <name type="ordered locus">P9515_05141</name>
</gene>
<feature type="chain" id="PRO_0000332046" description="Chaperonin GroEL 1">
    <location>
        <begin position="1"/>
        <end position="587"/>
    </location>
</feature>
<feature type="binding site" evidence="1">
    <location>
        <begin position="29"/>
        <end position="32"/>
    </location>
    <ligand>
        <name>ATP</name>
        <dbReference type="ChEBI" id="CHEBI:30616"/>
    </ligand>
</feature>
<feature type="binding site" evidence="1">
    <location>
        <begin position="86"/>
        <end position="90"/>
    </location>
    <ligand>
        <name>ATP</name>
        <dbReference type="ChEBI" id="CHEBI:30616"/>
    </ligand>
</feature>
<feature type="binding site" evidence="1">
    <location>
        <position position="413"/>
    </location>
    <ligand>
        <name>ATP</name>
        <dbReference type="ChEBI" id="CHEBI:30616"/>
    </ligand>
</feature>
<feature type="binding site" evidence="1">
    <location>
        <position position="492"/>
    </location>
    <ligand>
        <name>ATP</name>
        <dbReference type="ChEBI" id="CHEBI:30616"/>
    </ligand>
</feature>